<organism>
    <name type="scientific">Oryza sativa subsp. japonica</name>
    <name type="common">Rice</name>
    <dbReference type="NCBI Taxonomy" id="39947"/>
    <lineage>
        <taxon>Eukaryota</taxon>
        <taxon>Viridiplantae</taxon>
        <taxon>Streptophyta</taxon>
        <taxon>Embryophyta</taxon>
        <taxon>Tracheophyta</taxon>
        <taxon>Spermatophyta</taxon>
        <taxon>Magnoliopsida</taxon>
        <taxon>Liliopsida</taxon>
        <taxon>Poales</taxon>
        <taxon>Poaceae</taxon>
        <taxon>BOP clade</taxon>
        <taxon>Oryzoideae</taxon>
        <taxon>Oryzeae</taxon>
        <taxon>Oryzinae</taxon>
        <taxon>Oryza</taxon>
        <taxon>Oryza sativa</taxon>
    </lineage>
</organism>
<reference key="1">
    <citation type="journal article" date="2005" name="Nature">
        <title>The map-based sequence of the rice genome.</title>
        <authorList>
            <consortium name="International rice genome sequencing project (IRGSP)"/>
        </authorList>
    </citation>
    <scope>NUCLEOTIDE SEQUENCE [LARGE SCALE GENOMIC DNA]</scope>
    <source>
        <strain>cv. Nipponbare</strain>
    </source>
</reference>
<reference key="2">
    <citation type="journal article" date="2008" name="Nucleic Acids Res.">
        <title>The rice annotation project database (RAP-DB): 2008 update.</title>
        <authorList>
            <consortium name="The rice annotation project (RAP)"/>
        </authorList>
    </citation>
    <scope>GENOME REANNOTATION</scope>
    <source>
        <strain>cv. Nipponbare</strain>
    </source>
</reference>
<reference key="3">
    <citation type="journal article" date="2013" name="Rice">
        <title>Improvement of the Oryza sativa Nipponbare reference genome using next generation sequence and optical map data.</title>
        <authorList>
            <person name="Kawahara Y."/>
            <person name="de la Bastide M."/>
            <person name="Hamilton J.P."/>
            <person name="Kanamori H."/>
            <person name="McCombie W.R."/>
            <person name="Ouyang S."/>
            <person name="Schwartz D.C."/>
            <person name="Tanaka T."/>
            <person name="Wu J."/>
            <person name="Zhou S."/>
            <person name="Childs K.L."/>
            <person name="Davidson R.M."/>
            <person name="Lin H."/>
            <person name="Quesada-Ocampo L."/>
            <person name="Vaillancourt B."/>
            <person name="Sakai H."/>
            <person name="Lee S.S."/>
            <person name="Kim J."/>
            <person name="Numa H."/>
            <person name="Itoh T."/>
            <person name="Buell C.R."/>
            <person name="Matsumoto T."/>
        </authorList>
    </citation>
    <scope>GENOME REANNOTATION</scope>
    <source>
        <strain>cv. Nipponbare</strain>
    </source>
</reference>
<reference key="4">
    <citation type="journal article" date="2005" name="Planta">
        <title>Structure of the cinnamyl-alcohol dehydrogenase gene family in rice and promoter activity of a member associated with lignification.</title>
        <authorList>
            <person name="Tobias C.M."/>
            <person name="Chow E.K."/>
        </authorList>
    </citation>
    <scope>GENE FAMILY</scope>
    <scope>NOMENCLATURE</scope>
</reference>
<name>CAD8B_ORYSJ</name>
<feature type="chain" id="PRO_0000382648" description="Probable cinnamyl alcohol dehydrogenase 8B">
    <location>
        <begin position="1"/>
        <end position="436"/>
    </location>
</feature>
<feature type="binding site" evidence="1">
    <location>
        <position position="120"/>
    </location>
    <ligand>
        <name>Zn(2+)</name>
        <dbReference type="ChEBI" id="CHEBI:29105"/>
        <label>1</label>
        <note>catalytic</note>
    </ligand>
</feature>
<feature type="binding site" evidence="1">
    <location>
        <position position="122"/>
    </location>
    <ligand>
        <name>NADP(+)</name>
        <dbReference type="ChEBI" id="CHEBI:58349"/>
    </ligand>
</feature>
<feature type="binding site" evidence="1">
    <location>
        <position position="142"/>
    </location>
    <ligand>
        <name>Zn(2+)</name>
        <dbReference type="ChEBI" id="CHEBI:29105"/>
        <label>1</label>
        <note>catalytic</note>
    </ligand>
</feature>
<feature type="binding site" evidence="1">
    <location>
        <position position="143"/>
    </location>
    <ligand>
        <name>Zn(2+)</name>
        <dbReference type="ChEBI" id="CHEBI:29105"/>
        <label>1</label>
        <note>catalytic</note>
    </ligand>
</feature>
<feature type="binding site" evidence="1">
    <location>
        <position position="173"/>
    </location>
    <ligand>
        <name>Zn(2+)</name>
        <dbReference type="ChEBI" id="CHEBI:29105"/>
        <label>2</label>
    </ligand>
</feature>
<feature type="binding site" evidence="1">
    <location>
        <position position="176"/>
    </location>
    <ligand>
        <name>Zn(2+)</name>
        <dbReference type="ChEBI" id="CHEBI:29105"/>
        <label>2</label>
    </ligand>
</feature>
<feature type="binding site" evidence="1">
    <location>
        <position position="179"/>
    </location>
    <ligand>
        <name>Zn(2+)</name>
        <dbReference type="ChEBI" id="CHEBI:29105"/>
        <label>2</label>
    </ligand>
</feature>
<feature type="binding site" evidence="1">
    <location>
        <position position="187"/>
    </location>
    <ligand>
        <name>Zn(2+)</name>
        <dbReference type="ChEBI" id="CHEBI:29105"/>
        <label>2</label>
    </ligand>
</feature>
<feature type="binding site" evidence="1">
    <location>
        <position position="236"/>
    </location>
    <ligand>
        <name>Zn(2+)</name>
        <dbReference type="ChEBI" id="CHEBI:29105"/>
        <label>1</label>
        <note>catalytic</note>
    </ligand>
</feature>
<feature type="binding site" evidence="1">
    <location>
        <position position="240"/>
    </location>
    <ligand>
        <name>NADP(+)</name>
        <dbReference type="ChEBI" id="CHEBI:58349"/>
    </ligand>
</feature>
<feature type="binding site" evidence="1">
    <location>
        <begin position="261"/>
        <end position="266"/>
    </location>
    <ligand>
        <name>NADP(+)</name>
        <dbReference type="ChEBI" id="CHEBI:58349"/>
    </ligand>
</feature>
<feature type="binding site" evidence="1">
    <location>
        <begin position="284"/>
        <end position="289"/>
    </location>
    <ligand>
        <name>NADP(+)</name>
        <dbReference type="ChEBI" id="CHEBI:58349"/>
    </ligand>
</feature>
<feature type="binding site" evidence="1">
    <location>
        <position position="324"/>
    </location>
    <ligand>
        <name>NADP(+)</name>
        <dbReference type="ChEBI" id="CHEBI:58349"/>
    </ligand>
</feature>
<feature type="binding site" evidence="1">
    <location>
        <position position="348"/>
    </location>
    <ligand>
        <name>NADP(+)</name>
        <dbReference type="ChEBI" id="CHEBI:58349"/>
    </ligand>
</feature>
<feature type="binding site" evidence="1">
    <location>
        <begin position="371"/>
        <end position="373"/>
    </location>
    <ligand>
        <name>NADP(+)</name>
        <dbReference type="ChEBI" id="CHEBI:58349"/>
    </ligand>
</feature>
<sequence length="436" mass="45575">MSRHFRTHTTSRLTFPSSSGGLAITRLPFSSTSSKLLLQQLSSTSPAAAATAVTITTSSPARNLQRARASAAEQGMEEHGKAAVGWAARDDSGVLSPYNFSRRAQKDDDVTIKVLYCGICHTDLHVVKNDWGNAMYPVVPGHEIVGVVTGVGAGVTKFKAGDTVGVGFFVGSCRTCDSCGKGYENYCPTMVITSNGKDYGGAATQGGFSDAIVVNEHYVLRVPAGLPLDGAAPLLCAGVTVYSPMVIHGLNAPGKHVGVVGLGGLGHVAVKFAKAFGMRVTVISTSPGKRREALEHLGADEFLVSRDAGQMAAAAGTMDGILNTVSAWHPVAPLFALMKPMAQMVFVGAPTRPLELPAYAIVPGGKGITGNCVGGIRDCQAMLDFAGEHGITAEVEVIKMDYVNTAMERLEKNDVRYRFVIDVAGSSLGGSGDDKI</sequence>
<proteinExistence type="inferred from homology"/>
<dbReference type="EC" id="1.1.1.195" evidence="1"/>
<dbReference type="EMBL" id="AP005321">
    <property type="protein sequence ID" value="BAD28500.1"/>
    <property type="status" value="ALT_INIT"/>
    <property type="molecule type" value="Genomic_DNA"/>
</dbReference>
<dbReference type="EMBL" id="AP005421">
    <property type="protein sequence ID" value="BAD28601.1"/>
    <property type="status" value="ALT_INIT"/>
    <property type="molecule type" value="Genomic_DNA"/>
</dbReference>
<dbReference type="EMBL" id="AP008215">
    <property type="protein sequence ID" value="BAF25024.1"/>
    <property type="status" value="ALT_INIT"/>
    <property type="molecule type" value="Genomic_DNA"/>
</dbReference>
<dbReference type="EMBL" id="AP014965">
    <property type="protein sequence ID" value="BAT07959.1"/>
    <property type="molecule type" value="Genomic_DNA"/>
</dbReference>
<dbReference type="RefSeq" id="XP_015612230.1">
    <property type="nucleotide sequence ID" value="XM_015756744.1"/>
</dbReference>
<dbReference type="SMR" id="Q6ERW9"/>
<dbReference type="FunCoup" id="Q6ERW9">
    <property type="interactions" value="57"/>
</dbReference>
<dbReference type="STRING" id="39947.Q6ERW9"/>
<dbReference type="PaxDb" id="39947-Q6ERW9"/>
<dbReference type="EnsemblPlants" id="Os09t0400000-00">
    <property type="protein sequence ID" value="Os09t0400000-00"/>
    <property type="gene ID" value="Os09g0400000"/>
</dbReference>
<dbReference type="Gramene" id="Os09t0400000-00">
    <property type="protein sequence ID" value="Os09t0400000-00"/>
    <property type="gene ID" value="Os09g0400000"/>
</dbReference>
<dbReference type="KEGG" id="dosa:Os09g0400000"/>
<dbReference type="eggNOG" id="KOG0023">
    <property type="taxonomic scope" value="Eukaryota"/>
</dbReference>
<dbReference type="HOGENOM" id="CLU_026673_20_2_1"/>
<dbReference type="InParanoid" id="Q6ERW9"/>
<dbReference type="OMA" id="DMPLAQY"/>
<dbReference type="OrthoDB" id="1879366at2759"/>
<dbReference type="UniPathway" id="UPA00711"/>
<dbReference type="Proteomes" id="UP000000763">
    <property type="component" value="Chromosome 9"/>
</dbReference>
<dbReference type="Proteomes" id="UP000059680">
    <property type="component" value="Chromosome 9"/>
</dbReference>
<dbReference type="GO" id="GO:0045551">
    <property type="term" value="F:cinnamyl-alcohol dehydrogenase activity"/>
    <property type="evidence" value="ECO:0000318"/>
    <property type="project" value="GO_Central"/>
</dbReference>
<dbReference type="GO" id="GO:0050268">
    <property type="term" value="F:coniferyl-alcohol dehydrogenase activity"/>
    <property type="evidence" value="ECO:0007669"/>
    <property type="project" value="RHEA"/>
</dbReference>
<dbReference type="GO" id="GO:0008270">
    <property type="term" value="F:zinc ion binding"/>
    <property type="evidence" value="ECO:0007669"/>
    <property type="project" value="InterPro"/>
</dbReference>
<dbReference type="GO" id="GO:0009809">
    <property type="term" value="P:lignin biosynthetic process"/>
    <property type="evidence" value="ECO:0000318"/>
    <property type="project" value="GO_Central"/>
</dbReference>
<dbReference type="CDD" id="cd05283">
    <property type="entry name" value="CAD1"/>
    <property type="match status" value="1"/>
</dbReference>
<dbReference type="FunFam" id="3.40.50.720:FF:000022">
    <property type="entry name" value="Cinnamyl alcohol dehydrogenase"/>
    <property type="match status" value="1"/>
</dbReference>
<dbReference type="FunFam" id="3.90.180.10:FF:000004">
    <property type="entry name" value="probable cinnamyl alcohol dehydrogenase"/>
    <property type="match status" value="1"/>
</dbReference>
<dbReference type="FunFam" id="3.90.180.10:FF:000100">
    <property type="entry name" value="Putative cinnamyl alcohol dehydrogenase 6"/>
    <property type="match status" value="1"/>
</dbReference>
<dbReference type="Gene3D" id="3.90.180.10">
    <property type="entry name" value="Medium-chain alcohol dehydrogenases, catalytic domain"/>
    <property type="match status" value="1"/>
</dbReference>
<dbReference type="Gene3D" id="3.40.50.720">
    <property type="entry name" value="NAD(P)-binding Rossmann-like Domain"/>
    <property type="match status" value="1"/>
</dbReference>
<dbReference type="InterPro" id="IPR013149">
    <property type="entry name" value="ADH-like_C"/>
</dbReference>
<dbReference type="InterPro" id="IPR013154">
    <property type="entry name" value="ADH-like_N"/>
</dbReference>
<dbReference type="InterPro" id="IPR002328">
    <property type="entry name" value="ADH_Zn_CS"/>
</dbReference>
<dbReference type="InterPro" id="IPR047109">
    <property type="entry name" value="CAD-like"/>
</dbReference>
<dbReference type="InterPro" id="IPR011032">
    <property type="entry name" value="GroES-like_sf"/>
</dbReference>
<dbReference type="InterPro" id="IPR036291">
    <property type="entry name" value="NAD(P)-bd_dom_sf"/>
</dbReference>
<dbReference type="InterPro" id="IPR020843">
    <property type="entry name" value="PKS_ER"/>
</dbReference>
<dbReference type="PANTHER" id="PTHR42683">
    <property type="entry name" value="ALDEHYDE REDUCTASE"/>
    <property type="match status" value="1"/>
</dbReference>
<dbReference type="Pfam" id="PF08240">
    <property type="entry name" value="ADH_N"/>
    <property type="match status" value="1"/>
</dbReference>
<dbReference type="Pfam" id="PF00107">
    <property type="entry name" value="ADH_zinc_N"/>
    <property type="match status" value="1"/>
</dbReference>
<dbReference type="SMART" id="SM00829">
    <property type="entry name" value="PKS_ER"/>
    <property type="match status" value="1"/>
</dbReference>
<dbReference type="SUPFAM" id="SSF50129">
    <property type="entry name" value="GroES-like"/>
    <property type="match status" value="1"/>
</dbReference>
<dbReference type="SUPFAM" id="SSF51735">
    <property type="entry name" value="NAD(P)-binding Rossmann-fold domains"/>
    <property type="match status" value="1"/>
</dbReference>
<dbReference type="PROSITE" id="PS00059">
    <property type="entry name" value="ADH_ZINC"/>
    <property type="match status" value="1"/>
</dbReference>
<protein>
    <recommendedName>
        <fullName evidence="3">Probable cinnamyl alcohol dehydrogenase 8B</fullName>
        <shortName evidence="2">OsCAD8B</shortName>
        <ecNumber evidence="1">1.1.1.195</ecNumber>
    </recommendedName>
</protein>
<comment type="function">
    <text evidence="1">Involved in lignin biosynthesis. Catalyzes the final step specific for the production of lignin monomers. Catalyzes the NADPH-dependent reduction of coniferaldehyde, 5-hydroxyconiferaldehyde, sinapaldehyde, 4-coumaraldehyde and caffeyl aldehyde to their respective alcohols.</text>
</comment>
<comment type="catalytic activity">
    <reaction evidence="1">
        <text>(E)-cinnamyl alcohol + NADP(+) = (E)-cinnamaldehyde + NADPH + H(+)</text>
        <dbReference type="Rhea" id="RHEA:10392"/>
        <dbReference type="ChEBI" id="CHEBI:15378"/>
        <dbReference type="ChEBI" id="CHEBI:16731"/>
        <dbReference type="ChEBI" id="CHEBI:33227"/>
        <dbReference type="ChEBI" id="CHEBI:57783"/>
        <dbReference type="ChEBI" id="CHEBI:58349"/>
        <dbReference type="EC" id="1.1.1.195"/>
    </reaction>
    <physiologicalReaction direction="right-to-left" evidence="1">
        <dbReference type="Rhea" id="RHEA:10394"/>
    </physiologicalReaction>
</comment>
<comment type="catalytic activity">
    <reaction evidence="1">
        <text>(E)-coniferol + NADP(+) = (E)-coniferaldehyde + NADPH + H(+)</text>
        <dbReference type="Rhea" id="RHEA:22444"/>
        <dbReference type="ChEBI" id="CHEBI:15378"/>
        <dbReference type="ChEBI" id="CHEBI:16547"/>
        <dbReference type="ChEBI" id="CHEBI:17745"/>
        <dbReference type="ChEBI" id="CHEBI:57783"/>
        <dbReference type="ChEBI" id="CHEBI:58349"/>
        <dbReference type="EC" id="1.1.1.195"/>
    </reaction>
    <physiologicalReaction direction="right-to-left" evidence="1">
        <dbReference type="Rhea" id="RHEA:22446"/>
    </physiologicalReaction>
</comment>
<comment type="catalytic activity">
    <reaction evidence="1">
        <text>(E)-sinapyl alcohol + NADP(+) = (E)-sinapaldehyde + NADPH + H(+)</text>
        <dbReference type="Rhea" id="RHEA:45704"/>
        <dbReference type="ChEBI" id="CHEBI:15378"/>
        <dbReference type="ChEBI" id="CHEBI:27949"/>
        <dbReference type="ChEBI" id="CHEBI:57783"/>
        <dbReference type="ChEBI" id="CHEBI:58349"/>
        <dbReference type="ChEBI" id="CHEBI:64557"/>
        <dbReference type="EC" id="1.1.1.195"/>
    </reaction>
    <physiologicalReaction direction="right-to-left" evidence="1">
        <dbReference type="Rhea" id="RHEA:45706"/>
    </physiologicalReaction>
</comment>
<comment type="catalytic activity">
    <reaction evidence="1">
        <text>(E)-4-coumaroyl alcohol + NADP(+) = (E)-4-coumaraldehyde + NADPH + H(+)</text>
        <dbReference type="Rhea" id="RHEA:45724"/>
        <dbReference type="ChEBI" id="CHEBI:15378"/>
        <dbReference type="ChEBI" id="CHEBI:28353"/>
        <dbReference type="ChEBI" id="CHEBI:57783"/>
        <dbReference type="ChEBI" id="CHEBI:58349"/>
        <dbReference type="ChEBI" id="CHEBI:64555"/>
        <dbReference type="EC" id="1.1.1.195"/>
    </reaction>
    <physiologicalReaction direction="right-to-left" evidence="1">
        <dbReference type="Rhea" id="RHEA:45726"/>
    </physiologicalReaction>
</comment>
<comment type="catalytic activity">
    <reaction evidence="1">
        <text>(E)-caffeyl alcohol + NADP(+) = (E)-caffeyl aldehyde + NADPH + H(+)</text>
        <dbReference type="Rhea" id="RHEA:45728"/>
        <dbReference type="ChEBI" id="CHEBI:15378"/>
        <dbReference type="ChEBI" id="CHEBI:28323"/>
        <dbReference type="ChEBI" id="CHEBI:31334"/>
        <dbReference type="ChEBI" id="CHEBI:57783"/>
        <dbReference type="ChEBI" id="CHEBI:58349"/>
    </reaction>
    <physiologicalReaction direction="right-to-left" evidence="1">
        <dbReference type="Rhea" id="RHEA:45730"/>
    </physiologicalReaction>
</comment>
<comment type="cofactor">
    <cofactor evidence="1">
        <name>Zn(2+)</name>
        <dbReference type="ChEBI" id="CHEBI:29105"/>
    </cofactor>
    <text evidence="1">Binds 2 Zn(2+) ions per subunit.</text>
</comment>
<comment type="pathway">
    <text evidence="1">Aromatic compound metabolism; phenylpropanoid biosynthesis.</text>
</comment>
<comment type="subunit">
    <text evidence="1">Homodimer.</text>
</comment>
<comment type="similarity">
    <text evidence="3">Belongs to the zinc-containing alcohol dehydrogenase family.</text>
</comment>
<comment type="sequence caution" evidence="3">
    <conflict type="erroneous initiation">
        <sequence resource="EMBL-CDS" id="BAD28500"/>
    </conflict>
    <text>Truncated N-terminus.</text>
</comment>
<comment type="sequence caution" evidence="3">
    <conflict type="erroneous initiation">
        <sequence resource="EMBL-CDS" id="BAD28601"/>
    </conflict>
    <text>Truncated N-terminus.</text>
</comment>
<comment type="sequence caution" evidence="3">
    <conflict type="erroneous initiation">
        <sequence resource="EMBL-CDS" id="BAF25024"/>
    </conflict>
    <text>Truncated N-terminus.</text>
</comment>
<evidence type="ECO:0000250" key="1">
    <source>
        <dbReference type="UniProtKB" id="O49482"/>
    </source>
</evidence>
<evidence type="ECO:0000303" key="2">
    <source>
    </source>
</evidence>
<evidence type="ECO:0000305" key="3"/>
<keyword id="KW-0438">Lignin biosynthesis</keyword>
<keyword id="KW-0479">Metal-binding</keyword>
<keyword id="KW-0521">NADP</keyword>
<keyword id="KW-0560">Oxidoreductase</keyword>
<keyword id="KW-1185">Reference proteome</keyword>
<keyword id="KW-0862">Zinc</keyword>
<accession>Q6ERW9</accession>
<accession>A0A0P0XMA5</accession>
<gene>
    <name evidence="2" type="primary">CAD8B</name>
    <name type="ordered locus">Os09g0400000</name>
    <name type="ordered locus">LOC_Os09g23540</name>
    <name type="ORF">P0435D08.29</name>
    <name type="ORF">P0650H04.11</name>
</gene>